<reference key="1">
    <citation type="journal article" date="2011" name="PLoS Genet.">
        <title>The evolution of host specialization in the vertebrate gut symbiont Lactobacillus reuteri.</title>
        <authorList>
            <person name="Frese S.A."/>
            <person name="Benson A.K."/>
            <person name="Tannock G.W."/>
            <person name="Loach D.M."/>
            <person name="Kim J."/>
            <person name="Zhang M."/>
            <person name="Oh P.L."/>
            <person name="Heng N.C."/>
            <person name="Patil P.B."/>
            <person name="Juge N."/>
            <person name="Mackenzie D.A."/>
            <person name="Pearson B.M."/>
            <person name="Lapidus A."/>
            <person name="Dalin E."/>
            <person name="Tice H."/>
            <person name="Goltsman E."/>
            <person name="Land M."/>
            <person name="Hauser L."/>
            <person name="Ivanova N."/>
            <person name="Kyrpides N.C."/>
            <person name="Walter J."/>
        </authorList>
    </citation>
    <scope>NUCLEOTIDE SEQUENCE [LARGE SCALE GENOMIC DNA]</scope>
    <source>
        <strain>DSM 20016</strain>
    </source>
</reference>
<organism>
    <name type="scientific">Limosilactobacillus reuteri (strain DSM 20016)</name>
    <name type="common">Lactobacillus reuteri</name>
    <dbReference type="NCBI Taxonomy" id="557436"/>
    <lineage>
        <taxon>Bacteria</taxon>
        <taxon>Bacillati</taxon>
        <taxon>Bacillota</taxon>
        <taxon>Bacilli</taxon>
        <taxon>Lactobacillales</taxon>
        <taxon>Lactobacillaceae</taxon>
        <taxon>Limosilactobacillus</taxon>
    </lineage>
</organism>
<keyword id="KW-0963">Cytoplasm</keyword>
<keyword id="KW-0489">Methyltransferase</keyword>
<keyword id="KW-1185">Reference proteome</keyword>
<keyword id="KW-0698">rRNA processing</keyword>
<keyword id="KW-0949">S-adenosyl-L-methionine</keyword>
<keyword id="KW-0808">Transferase</keyword>
<name>RSMH_LIMRD</name>
<evidence type="ECO:0000255" key="1">
    <source>
        <dbReference type="HAMAP-Rule" id="MF_01007"/>
    </source>
</evidence>
<feature type="chain" id="PRO_0000386947" description="Ribosomal RNA small subunit methyltransferase H">
    <location>
        <begin position="1"/>
        <end position="318"/>
    </location>
</feature>
<feature type="binding site" evidence="1">
    <location>
        <begin position="34"/>
        <end position="36"/>
    </location>
    <ligand>
        <name>S-adenosyl-L-methionine</name>
        <dbReference type="ChEBI" id="CHEBI:59789"/>
    </ligand>
</feature>
<feature type="binding site" evidence="1">
    <location>
        <position position="53"/>
    </location>
    <ligand>
        <name>S-adenosyl-L-methionine</name>
        <dbReference type="ChEBI" id="CHEBI:59789"/>
    </ligand>
</feature>
<feature type="binding site" evidence="1">
    <location>
        <position position="82"/>
    </location>
    <ligand>
        <name>S-adenosyl-L-methionine</name>
        <dbReference type="ChEBI" id="CHEBI:59789"/>
    </ligand>
</feature>
<feature type="binding site" evidence="1">
    <location>
        <position position="103"/>
    </location>
    <ligand>
        <name>S-adenosyl-L-methionine</name>
        <dbReference type="ChEBI" id="CHEBI:59789"/>
    </ligand>
</feature>
<feature type="binding site" evidence="1">
    <location>
        <position position="110"/>
    </location>
    <ligand>
        <name>S-adenosyl-L-methionine</name>
        <dbReference type="ChEBI" id="CHEBI:59789"/>
    </ligand>
</feature>
<dbReference type="EC" id="2.1.1.199" evidence="1"/>
<dbReference type="EMBL" id="CP000705">
    <property type="protein sequence ID" value="ABQ82852.1"/>
    <property type="molecule type" value="Genomic_DNA"/>
</dbReference>
<dbReference type="RefSeq" id="WP_003668328.1">
    <property type="nucleotide sequence ID" value="NC_009513.1"/>
</dbReference>
<dbReference type="SMR" id="A5VJ28"/>
<dbReference type="STRING" id="557436.Lreu_0585"/>
<dbReference type="KEGG" id="lre:Lreu_0585"/>
<dbReference type="PATRIC" id="fig|557436.17.peg.657"/>
<dbReference type="eggNOG" id="COG0275">
    <property type="taxonomic scope" value="Bacteria"/>
</dbReference>
<dbReference type="HOGENOM" id="CLU_038422_2_0_9"/>
<dbReference type="OMA" id="NPAKRTF"/>
<dbReference type="Proteomes" id="UP000001991">
    <property type="component" value="Chromosome"/>
</dbReference>
<dbReference type="GO" id="GO:0005737">
    <property type="term" value="C:cytoplasm"/>
    <property type="evidence" value="ECO:0007669"/>
    <property type="project" value="UniProtKB-SubCell"/>
</dbReference>
<dbReference type="GO" id="GO:0071424">
    <property type="term" value="F:rRNA (cytosine-N4-)-methyltransferase activity"/>
    <property type="evidence" value="ECO:0007669"/>
    <property type="project" value="UniProtKB-UniRule"/>
</dbReference>
<dbReference type="GO" id="GO:0070475">
    <property type="term" value="P:rRNA base methylation"/>
    <property type="evidence" value="ECO:0007669"/>
    <property type="project" value="UniProtKB-UniRule"/>
</dbReference>
<dbReference type="FunFam" id="1.10.150.170:FF:000001">
    <property type="entry name" value="Ribosomal RNA small subunit methyltransferase H"/>
    <property type="match status" value="1"/>
</dbReference>
<dbReference type="Gene3D" id="1.10.150.170">
    <property type="entry name" value="Putative methyltransferase TM0872, insert domain"/>
    <property type="match status" value="1"/>
</dbReference>
<dbReference type="Gene3D" id="3.40.50.150">
    <property type="entry name" value="Vaccinia Virus protein VP39"/>
    <property type="match status" value="1"/>
</dbReference>
<dbReference type="HAMAP" id="MF_01007">
    <property type="entry name" value="16SrRNA_methyltr_H"/>
    <property type="match status" value="1"/>
</dbReference>
<dbReference type="InterPro" id="IPR002903">
    <property type="entry name" value="RsmH"/>
</dbReference>
<dbReference type="InterPro" id="IPR023397">
    <property type="entry name" value="SAM-dep_MeTrfase_MraW_recog"/>
</dbReference>
<dbReference type="InterPro" id="IPR029063">
    <property type="entry name" value="SAM-dependent_MTases_sf"/>
</dbReference>
<dbReference type="NCBIfam" id="TIGR00006">
    <property type="entry name" value="16S rRNA (cytosine(1402)-N(4))-methyltransferase RsmH"/>
    <property type="match status" value="1"/>
</dbReference>
<dbReference type="PANTHER" id="PTHR11265:SF0">
    <property type="entry name" value="12S RRNA N4-METHYLCYTIDINE METHYLTRANSFERASE"/>
    <property type="match status" value="1"/>
</dbReference>
<dbReference type="PANTHER" id="PTHR11265">
    <property type="entry name" value="S-ADENOSYL-METHYLTRANSFERASE MRAW"/>
    <property type="match status" value="1"/>
</dbReference>
<dbReference type="Pfam" id="PF01795">
    <property type="entry name" value="Methyltransf_5"/>
    <property type="match status" value="1"/>
</dbReference>
<dbReference type="PIRSF" id="PIRSF004486">
    <property type="entry name" value="MraW"/>
    <property type="match status" value="1"/>
</dbReference>
<dbReference type="SUPFAM" id="SSF81799">
    <property type="entry name" value="Putative methyltransferase TM0872, insert domain"/>
    <property type="match status" value="1"/>
</dbReference>
<dbReference type="SUPFAM" id="SSF53335">
    <property type="entry name" value="S-adenosyl-L-methionine-dependent methyltransferases"/>
    <property type="match status" value="1"/>
</dbReference>
<gene>
    <name evidence="1" type="primary">rsmH</name>
    <name type="synonym">mraW</name>
    <name type="ordered locus">Lreu_0585</name>
</gene>
<sequence length="318" mass="35667">MAEFKHVTVLLKEAVAGLNVQPTGTYVDATLGGGGHTQAILQQLVDGHLYSFDQDQTAIDYNKEHLKTAIEQQKLTLVEDNFRNLKAELNSYNVKHVNGILYDLGVSSPQFDDAKRGFSYQHDAPLDMRMNQEQKLSAMEVVNEWPYERLVKILYRYGEEKFAKSIARKIEQRRKVAPIKTTFELVDVIKEGIPAAARRHGGHPAKKSFQAIRIAVNDELGALEESLEQALDLLDVGGRISVITFQSLEDRLVKTMFREKTSLSGDVPQGLPVIPAGMEPNFKLINKKPIVASDEELAANHRAHSAKLRIIEKIREGK</sequence>
<protein>
    <recommendedName>
        <fullName evidence="1">Ribosomal RNA small subunit methyltransferase H</fullName>
        <ecNumber evidence="1">2.1.1.199</ecNumber>
    </recommendedName>
    <alternativeName>
        <fullName evidence="1">16S rRNA m(4)C1402 methyltransferase</fullName>
    </alternativeName>
    <alternativeName>
        <fullName evidence="1">rRNA (cytosine-N(4)-)-methyltransferase RsmH</fullName>
    </alternativeName>
</protein>
<accession>A5VJ28</accession>
<comment type="function">
    <text evidence="1">Specifically methylates the N4 position of cytidine in position 1402 (C1402) of 16S rRNA.</text>
</comment>
<comment type="catalytic activity">
    <reaction evidence="1">
        <text>cytidine(1402) in 16S rRNA + S-adenosyl-L-methionine = N(4)-methylcytidine(1402) in 16S rRNA + S-adenosyl-L-homocysteine + H(+)</text>
        <dbReference type="Rhea" id="RHEA:42928"/>
        <dbReference type="Rhea" id="RHEA-COMP:10286"/>
        <dbReference type="Rhea" id="RHEA-COMP:10287"/>
        <dbReference type="ChEBI" id="CHEBI:15378"/>
        <dbReference type="ChEBI" id="CHEBI:57856"/>
        <dbReference type="ChEBI" id="CHEBI:59789"/>
        <dbReference type="ChEBI" id="CHEBI:74506"/>
        <dbReference type="ChEBI" id="CHEBI:82748"/>
        <dbReference type="EC" id="2.1.1.199"/>
    </reaction>
</comment>
<comment type="subcellular location">
    <subcellularLocation>
        <location evidence="1">Cytoplasm</location>
    </subcellularLocation>
</comment>
<comment type="similarity">
    <text evidence="1">Belongs to the methyltransferase superfamily. RsmH family.</text>
</comment>
<proteinExistence type="inferred from homology"/>